<sequence length="88" mass="9720">MANSKSAKKRALQSEKRRQHNASRRSMLRTYVKKVIAAIKAGDHKTATEAFAVAQPIVDRMATKGLIHKNKAARQKARLNAKIKAIAA</sequence>
<keyword id="KW-0687">Ribonucleoprotein</keyword>
<keyword id="KW-0689">Ribosomal protein</keyword>
<keyword id="KW-0694">RNA-binding</keyword>
<keyword id="KW-0699">rRNA-binding</keyword>
<dbReference type="EMBL" id="CP000681">
    <property type="protein sequence ID" value="ABP74784.1"/>
    <property type="molecule type" value="Genomic_DNA"/>
</dbReference>
<dbReference type="SMR" id="A4Y4A1"/>
<dbReference type="STRING" id="319224.Sputcn32_1056"/>
<dbReference type="KEGG" id="spc:Sputcn32_1056"/>
<dbReference type="eggNOG" id="COG0268">
    <property type="taxonomic scope" value="Bacteria"/>
</dbReference>
<dbReference type="HOGENOM" id="CLU_160655_4_0_6"/>
<dbReference type="GO" id="GO:0005829">
    <property type="term" value="C:cytosol"/>
    <property type="evidence" value="ECO:0007669"/>
    <property type="project" value="TreeGrafter"/>
</dbReference>
<dbReference type="GO" id="GO:0015935">
    <property type="term" value="C:small ribosomal subunit"/>
    <property type="evidence" value="ECO:0007669"/>
    <property type="project" value="TreeGrafter"/>
</dbReference>
<dbReference type="GO" id="GO:0070181">
    <property type="term" value="F:small ribosomal subunit rRNA binding"/>
    <property type="evidence" value="ECO:0007669"/>
    <property type="project" value="TreeGrafter"/>
</dbReference>
<dbReference type="GO" id="GO:0003735">
    <property type="term" value="F:structural constituent of ribosome"/>
    <property type="evidence" value="ECO:0007669"/>
    <property type="project" value="InterPro"/>
</dbReference>
<dbReference type="GO" id="GO:0006412">
    <property type="term" value="P:translation"/>
    <property type="evidence" value="ECO:0007669"/>
    <property type="project" value="UniProtKB-UniRule"/>
</dbReference>
<dbReference type="FunFam" id="1.20.58.110:FF:000001">
    <property type="entry name" value="30S ribosomal protein S20"/>
    <property type="match status" value="1"/>
</dbReference>
<dbReference type="Gene3D" id="1.20.58.110">
    <property type="entry name" value="Ribosomal protein S20"/>
    <property type="match status" value="1"/>
</dbReference>
<dbReference type="HAMAP" id="MF_00500">
    <property type="entry name" value="Ribosomal_bS20"/>
    <property type="match status" value="1"/>
</dbReference>
<dbReference type="InterPro" id="IPR002583">
    <property type="entry name" value="Ribosomal_bS20"/>
</dbReference>
<dbReference type="InterPro" id="IPR036510">
    <property type="entry name" value="Ribosomal_bS20_sf"/>
</dbReference>
<dbReference type="NCBIfam" id="TIGR00029">
    <property type="entry name" value="S20"/>
    <property type="match status" value="1"/>
</dbReference>
<dbReference type="PANTHER" id="PTHR33398">
    <property type="entry name" value="30S RIBOSOMAL PROTEIN S20"/>
    <property type="match status" value="1"/>
</dbReference>
<dbReference type="PANTHER" id="PTHR33398:SF1">
    <property type="entry name" value="SMALL RIBOSOMAL SUBUNIT PROTEIN BS20C"/>
    <property type="match status" value="1"/>
</dbReference>
<dbReference type="Pfam" id="PF01649">
    <property type="entry name" value="Ribosomal_S20p"/>
    <property type="match status" value="1"/>
</dbReference>
<dbReference type="SUPFAM" id="SSF46992">
    <property type="entry name" value="Ribosomal protein S20"/>
    <property type="match status" value="1"/>
</dbReference>
<feature type="chain" id="PRO_1000014653" description="Small ribosomal subunit protein bS20">
    <location>
        <begin position="1"/>
        <end position="88"/>
    </location>
</feature>
<feature type="region of interest" description="Disordered" evidence="2">
    <location>
        <begin position="1"/>
        <end position="27"/>
    </location>
</feature>
<comment type="function">
    <text evidence="1">Binds directly to 16S ribosomal RNA.</text>
</comment>
<comment type="similarity">
    <text evidence="1">Belongs to the bacterial ribosomal protein bS20 family.</text>
</comment>
<accession>A4Y4A1</accession>
<organism>
    <name type="scientific">Shewanella putrefaciens (strain CN-32 / ATCC BAA-453)</name>
    <dbReference type="NCBI Taxonomy" id="319224"/>
    <lineage>
        <taxon>Bacteria</taxon>
        <taxon>Pseudomonadati</taxon>
        <taxon>Pseudomonadota</taxon>
        <taxon>Gammaproteobacteria</taxon>
        <taxon>Alteromonadales</taxon>
        <taxon>Shewanellaceae</taxon>
        <taxon>Shewanella</taxon>
    </lineage>
</organism>
<name>RS20_SHEPC</name>
<proteinExistence type="inferred from homology"/>
<evidence type="ECO:0000255" key="1">
    <source>
        <dbReference type="HAMAP-Rule" id="MF_00500"/>
    </source>
</evidence>
<evidence type="ECO:0000256" key="2">
    <source>
        <dbReference type="SAM" id="MobiDB-lite"/>
    </source>
</evidence>
<evidence type="ECO:0000305" key="3"/>
<protein>
    <recommendedName>
        <fullName evidence="1">Small ribosomal subunit protein bS20</fullName>
    </recommendedName>
    <alternativeName>
        <fullName evidence="3">30S ribosomal protein S20</fullName>
    </alternativeName>
</protein>
<gene>
    <name evidence="1" type="primary">rpsT</name>
    <name type="ordered locus">Sputcn32_1056</name>
</gene>
<reference key="1">
    <citation type="submission" date="2007-04" db="EMBL/GenBank/DDBJ databases">
        <title>Complete sequence of Shewanella putrefaciens CN-32.</title>
        <authorList>
            <consortium name="US DOE Joint Genome Institute"/>
            <person name="Copeland A."/>
            <person name="Lucas S."/>
            <person name="Lapidus A."/>
            <person name="Barry K."/>
            <person name="Detter J.C."/>
            <person name="Glavina del Rio T."/>
            <person name="Hammon N."/>
            <person name="Israni S."/>
            <person name="Dalin E."/>
            <person name="Tice H."/>
            <person name="Pitluck S."/>
            <person name="Chain P."/>
            <person name="Malfatti S."/>
            <person name="Shin M."/>
            <person name="Vergez L."/>
            <person name="Schmutz J."/>
            <person name="Larimer F."/>
            <person name="Land M."/>
            <person name="Hauser L."/>
            <person name="Kyrpides N."/>
            <person name="Mikhailova N."/>
            <person name="Romine M.F."/>
            <person name="Fredrickson J."/>
            <person name="Tiedje J."/>
            <person name="Richardson P."/>
        </authorList>
    </citation>
    <scope>NUCLEOTIDE SEQUENCE [LARGE SCALE GENOMIC DNA]</scope>
    <source>
        <strain>CN-32 / ATCC BAA-453</strain>
    </source>
</reference>